<feature type="chain" id="PRO_1000147543" description="Ribosomal RNA large subunit methyltransferase H">
    <location>
        <begin position="1"/>
        <end position="159"/>
    </location>
</feature>
<feature type="binding site" evidence="1">
    <location>
        <position position="76"/>
    </location>
    <ligand>
        <name>S-adenosyl-L-methionine</name>
        <dbReference type="ChEBI" id="CHEBI:59789"/>
    </ligand>
</feature>
<feature type="binding site" evidence="1">
    <location>
        <position position="108"/>
    </location>
    <ligand>
        <name>S-adenosyl-L-methionine</name>
        <dbReference type="ChEBI" id="CHEBI:59789"/>
    </ligand>
</feature>
<feature type="binding site" evidence="1">
    <location>
        <begin position="127"/>
        <end position="132"/>
    </location>
    <ligand>
        <name>S-adenosyl-L-methionine</name>
        <dbReference type="ChEBI" id="CHEBI:59789"/>
    </ligand>
</feature>
<comment type="function">
    <text evidence="1">Specifically methylates the pseudouridine at position 1915 (m3Psi1915) in 23S rRNA.</text>
</comment>
<comment type="catalytic activity">
    <reaction evidence="1">
        <text>pseudouridine(1915) in 23S rRNA + S-adenosyl-L-methionine = N(3)-methylpseudouridine(1915) in 23S rRNA + S-adenosyl-L-homocysteine + H(+)</text>
        <dbReference type="Rhea" id="RHEA:42752"/>
        <dbReference type="Rhea" id="RHEA-COMP:10221"/>
        <dbReference type="Rhea" id="RHEA-COMP:10222"/>
        <dbReference type="ChEBI" id="CHEBI:15378"/>
        <dbReference type="ChEBI" id="CHEBI:57856"/>
        <dbReference type="ChEBI" id="CHEBI:59789"/>
        <dbReference type="ChEBI" id="CHEBI:65314"/>
        <dbReference type="ChEBI" id="CHEBI:74486"/>
        <dbReference type="EC" id="2.1.1.177"/>
    </reaction>
</comment>
<comment type="subunit">
    <text evidence="1">Homodimer.</text>
</comment>
<comment type="subcellular location">
    <subcellularLocation>
        <location evidence="1">Cytoplasm</location>
    </subcellularLocation>
</comment>
<comment type="similarity">
    <text evidence="1">Belongs to the RNA methyltransferase RlmH family.</text>
</comment>
<organism>
    <name type="scientific">Clostridium kluyveri (strain NBRC 12016)</name>
    <dbReference type="NCBI Taxonomy" id="583346"/>
    <lineage>
        <taxon>Bacteria</taxon>
        <taxon>Bacillati</taxon>
        <taxon>Bacillota</taxon>
        <taxon>Clostridia</taxon>
        <taxon>Eubacteriales</taxon>
        <taxon>Clostridiaceae</taxon>
        <taxon>Clostridium</taxon>
    </lineage>
</organism>
<evidence type="ECO:0000255" key="1">
    <source>
        <dbReference type="HAMAP-Rule" id="MF_00658"/>
    </source>
</evidence>
<protein>
    <recommendedName>
        <fullName evidence="1">Ribosomal RNA large subunit methyltransferase H</fullName>
        <ecNumber evidence="1">2.1.1.177</ecNumber>
    </recommendedName>
    <alternativeName>
        <fullName evidence="1">23S rRNA (pseudouridine1915-N3)-methyltransferase</fullName>
    </alternativeName>
    <alternativeName>
        <fullName evidence="1">23S rRNA m3Psi1915 methyltransferase</fullName>
    </alternativeName>
    <alternativeName>
        <fullName evidence="1">rRNA (pseudouridine-N3-)-methyltransferase RlmH</fullName>
    </alternativeName>
</protein>
<accession>B9E3M4</accession>
<dbReference type="EC" id="2.1.1.177" evidence="1"/>
<dbReference type="EMBL" id="AP009049">
    <property type="protein sequence ID" value="BAH07099.1"/>
    <property type="molecule type" value="Genomic_DNA"/>
</dbReference>
<dbReference type="RefSeq" id="WP_012102672.1">
    <property type="nucleotide sequence ID" value="NC_011837.1"/>
</dbReference>
<dbReference type="SMR" id="B9E3M4"/>
<dbReference type="KEGG" id="ckr:CKR_2048"/>
<dbReference type="HOGENOM" id="CLU_100552_0_0_9"/>
<dbReference type="Proteomes" id="UP000007969">
    <property type="component" value="Chromosome"/>
</dbReference>
<dbReference type="GO" id="GO:0005737">
    <property type="term" value="C:cytoplasm"/>
    <property type="evidence" value="ECO:0007669"/>
    <property type="project" value="UniProtKB-SubCell"/>
</dbReference>
<dbReference type="GO" id="GO:0070038">
    <property type="term" value="F:rRNA (pseudouridine-N3-)-methyltransferase activity"/>
    <property type="evidence" value="ECO:0007669"/>
    <property type="project" value="UniProtKB-UniRule"/>
</dbReference>
<dbReference type="CDD" id="cd18081">
    <property type="entry name" value="RlmH-like"/>
    <property type="match status" value="1"/>
</dbReference>
<dbReference type="Gene3D" id="3.40.1280.10">
    <property type="match status" value="1"/>
</dbReference>
<dbReference type="HAMAP" id="MF_00658">
    <property type="entry name" value="23SrRNA_methyltr_H"/>
    <property type="match status" value="1"/>
</dbReference>
<dbReference type="InterPro" id="IPR029028">
    <property type="entry name" value="Alpha/beta_knot_MTases"/>
</dbReference>
<dbReference type="InterPro" id="IPR003742">
    <property type="entry name" value="RlmH-like"/>
</dbReference>
<dbReference type="InterPro" id="IPR029026">
    <property type="entry name" value="tRNA_m1G_MTases_N"/>
</dbReference>
<dbReference type="NCBIfam" id="NF000985">
    <property type="entry name" value="PRK00103.1-3"/>
    <property type="match status" value="1"/>
</dbReference>
<dbReference type="NCBIfam" id="TIGR00246">
    <property type="entry name" value="tRNA_RlmH_YbeA"/>
    <property type="match status" value="1"/>
</dbReference>
<dbReference type="PANTHER" id="PTHR33603">
    <property type="entry name" value="METHYLTRANSFERASE"/>
    <property type="match status" value="1"/>
</dbReference>
<dbReference type="PANTHER" id="PTHR33603:SF1">
    <property type="entry name" value="RIBOSOMAL RNA LARGE SUBUNIT METHYLTRANSFERASE H"/>
    <property type="match status" value="1"/>
</dbReference>
<dbReference type="Pfam" id="PF02590">
    <property type="entry name" value="SPOUT_MTase"/>
    <property type="match status" value="1"/>
</dbReference>
<dbReference type="PIRSF" id="PIRSF004505">
    <property type="entry name" value="MT_bac"/>
    <property type="match status" value="1"/>
</dbReference>
<dbReference type="SUPFAM" id="SSF75217">
    <property type="entry name" value="alpha/beta knot"/>
    <property type="match status" value="1"/>
</dbReference>
<reference key="1">
    <citation type="submission" date="2005-09" db="EMBL/GenBank/DDBJ databases">
        <title>Complete genome sequence of Clostridium kluyveri and comparative genomics of Clostridia species.</title>
        <authorList>
            <person name="Inui M."/>
            <person name="Nonaka H."/>
            <person name="Shinoda Y."/>
            <person name="Ikenaga Y."/>
            <person name="Abe M."/>
            <person name="Naito K."/>
            <person name="Vertes A.A."/>
            <person name="Yukawa H."/>
        </authorList>
    </citation>
    <scope>NUCLEOTIDE SEQUENCE [LARGE SCALE GENOMIC DNA]</scope>
    <source>
        <strain>NBRC 12016</strain>
    </source>
</reference>
<gene>
    <name evidence="1" type="primary">rlmH</name>
    <name type="ordered locus">CKR_2048</name>
</gene>
<proteinExistence type="inferred from homology"/>
<sequence>MNITIIAVGKLKEKYLKAAVEEYSKRLSRYCRLNIIEVQDEKTPDNASSSEQDIIKEKEGRRILKYINDNMYVVALDLKGSMMGSEEFSKFVGNLGLSGKSNIAFIIGGSLGISSEILKRADYKLCFSKMTFPHQLFRIMLLEQIYRGFRIMKGEPYHK</sequence>
<name>RLMH_CLOK1</name>
<keyword id="KW-0963">Cytoplasm</keyword>
<keyword id="KW-0489">Methyltransferase</keyword>
<keyword id="KW-0698">rRNA processing</keyword>
<keyword id="KW-0949">S-adenosyl-L-methionine</keyword>
<keyword id="KW-0808">Transferase</keyword>